<gene>
    <name evidence="1" type="primary">tyrS1</name>
    <name type="ordered locus">plu2596</name>
</gene>
<dbReference type="EC" id="6.1.1.1" evidence="1"/>
<dbReference type="EMBL" id="BX571867">
    <property type="protein sequence ID" value="CAE14970.1"/>
    <property type="molecule type" value="Genomic_DNA"/>
</dbReference>
<dbReference type="RefSeq" id="WP_011146818.1">
    <property type="nucleotide sequence ID" value="NC_005126.1"/>
</dbReference>
<dbReference type="SMR" id="Q7N3W6"/>
<dbReference type="STRING" id="243265.plu2596"/>
<dbReference type="GeneID" id="48848855"/>
<dbReference type="KEGG" id="plu:plu2596"/>
<dbReference type="eggNOG" id="COG0162">
    <property type="taxonomic scope" value="Bacteria"/>
</dbReference>
<dbReference type="HOGENOM" id="CLU_024003_0_3_6"/>
<dbReference type="OrthoDB" id="9804243at2"/>
<dbReference type="Proteomes" id="UP000002514">
    <property type="component" value="Chromosome"/>
</dbReference>
<dbReference type="GO" id="GO:0005829">
    <property type="term" value="C:cytosol"/>
    <property type="evidence" value="ECO:0007669"/>
    <property type="project" value="TreeGrafter"/>
</dbReference>
<dbReference type="GO" id="GO:0005524">
    <property type="term" value="F:ATP binding"/>
    <property type="evidence" value="ECO:0007669"/>
    <property type="project" value="UniProtKB-UniRule"/>
</dbReference>
<dbReference type="GO" id="GO:0003723">
    <property type="term" value="F:RNA binding"/>
    <property type="evidence" value="ECO:0007669"/>
    <property type="project" value="UniProtKB-KW"/>
</dbReference>
<dbReference type="GO" id="GO:0004831">
    <property type="term" value="F:tyrosine-tRNA ligase activity"/>
    <property type="evidence" value="ECO:0007669"/>
    <property type="project" value="UniProtKB-UniRule"/>
</dbReference>
<dbReference type="GO" id="GO:0006437">
    <property type="term" value="P:tyrosyl-tRNA aminoacylation"/>
    <property type="evidence" value="ECO:0007669"/>
    <property type="project" value="UniProtKB-UniRule"/>
</dbReference>
<dbReference type="CDD" id="cd00165">
    <property type="entry name" value="S4"/>
    <property type="match status" value="1"/>
</dbReference>
<dbReference type="CDD" id="cd00805">
    <property type="entry name" value="TyrRS_core"/>
    <property type="match status" value="1"/>
</dbReference>
<dbReference type="FunFam" id="1.10.240.10:FF:000001">
    <property type="entry name" value="Tyrosine--tRNA ligase"/>
    <property type="match status" value="1"/>
</dbReference>
<dbReference type="FunFam" id="3.40.50.620:FF:000008">
    <property type="entry name" value="Tyrosine--tRNA ligase"/>
    <property type="match status" value="1"/>
</dbReference>
<dbReference type="Gene3D" id="3.40.50.620">
    <property type="entry name" value="HUPs"/>
    <property type="match status" value="1"/>
</dbReference>
<dbReference type="Gene3D" id="3.10.290.10">
    <property type="entry name" value="RNA-binding S4 domain"/>
    <property type="match status" value="1"/>
</dbReference>
<dbReference type="Gene3D" id="1.10.240.10">
    <property type="entry name" value="Tyrosyl-Transfer RNA Synthetase"/>
    <property type="match status" value="1"/>
</dbReference>
<dbReference type="HAMAP" id="MF_02006">
    <property type="entry name" value="Tyr_tRNA_synth_type1"/>
    <property type="match status" value="1"/>
</dbReference>
<dbReference type="InterPro" id="IPR001412">
    <property type="entry name" value="aa-tRNA-synth_I_CS"/>
</dbReference>
<dbReference type="InterPro" id="IPR002305">
    <property type="entry name" value="aa-tRNA-synth_Ic"/>
</dbReference>
<dbReference type="InterPro" id="IPR014729">
    <property type="entry name" value="Rossmann-like_a/b/a_fold"/>
</dbReference>
<dbReference type="InterPro" id="IPR002942">
    <property type="entry name" value="S4_RNA-bd"/>
</dbReference>
<dbReference type="InterPro" id="IPR036986">
    <property type="entry name" value="S4_RNA-bd_sf"/>
</dbReference>
<dbReference type="InterPro" id="IPR054608">
    <property type="entry name" value="SYY-like_C"/>
</dbReference>
<dbReference type="InterPro" id="IPR002307">
    <property type="entry name" value="Tyr-tRNA-ligase"/>
</dbReference>
<dbReference type="InterPro" id="IPR024088">
    <property type="entry name" value="Tyr-tRNA-ligase_bac-type"/>
</dbReference>
<dbReference type="InterPro" id="IPR024107">
    <property type="entry name" value="Tyr-tRNA-ligase_bac_1"/>
</dbReference>
<dbReference type="NCBIfam" id="TIGR00234">
    <property type="entry name" value="tyrS"/>
    <property type="match status" value="1"/>
</dbReference>
<dbReference type="PANTHER" id="PTHR11766:SF0">
    <property type="entry name" value="TYROSINE--TRNA LIGASE, MITOCHONDRIAL"/>
    <property type="match status" value="1"/>
</dbReference>
<dbReference type="PANTHER" id="PTHR11766">
    <property type="entry name" value="TYROSYL-TRNA SYNTHETASE"/>
    <property type="match status" value="1"/>
</dbReference>
<dbReference type="Pfam" id="PF22421">
    <property type="entry name" value="SYY_C-terminal"/>
    <property type="match status" value="1"/>
</dbReference>
<dbReference type="Pfam" id="PF00579">
    <property type="entry name" value="tRNA-synt_1b"/>
    <property type="match status" value="1"/>
</dbReference>
<dbReference type="PRINTS" id="PR01040">
    <property type="entry name" value="TRNASYNTHTYR"/>
</dbReference>
<dbReference type="SMART" id="SM00363">
    <property type="entry name" value="S4"/>
    <property type="match status" value="1"/>
</dbReference>
<dbReference type="SUPFAM" id="SSF55174">
    <property type="entry name" value="Alpha-L RNA-binding motif"/>
    <property type="match status" value="1"/>
</dbReference>
<dbReference type="SUPFAM" id="SSF52374">
    <property type="entry name" value="Nucleotidylyl transferase"/>
    <property type="match status" value="1"/>
</dbReference>
<dbReference type="PROSITE" id="PS00178">
    <property type="entry name" value="AA_TRNA_LIGASE_I"/>
    <property type="match status" value="1"/>
</dbReference>
<dbReference type="PROSITE" id="PS50889">
    <property type="entry name" value="S4"/>
    <property type="match status" value="1"/>
</dbReference>
<reference key="1">
    <citation type="journal article" date="2003" name="Nat. Biotechnol.">
        <title>The genome sequence of the entomopathogenic bacterium Photorhabdus luminescens.</title>
        <authorList>
            <person name="Duchaud E."/>
            <person name="Rusniok C."/>
            <person name="Frangeul L."/>
            <person name="Buchrieser C."/>
            <person name="Givaudan A."/>
            <person name="Taourit S."/>
            <person name="Bocs S."/>
            <person name="Boursaux-Eude C."/>
            <person name="Chandler M."/>
            <person name="Charles J.-F."/>
            <person name="Dassa E."/>
            <person name="Derose R."/>
            <person name="Derzelle S."/>
            <person name="Freyssinet G."/>
            <person name="Gaudriault S."/>
            <person name="Medigue C."/>
            <person name="Lanois A."/>
            <person name="Powell K."/>
            <person name="Siguier P."/>
            <person name="Vincent R."/>
            <person name="Wingate V."/>
            <person name="Zouine M."/>
            <person name="Glaser P."/>
            <person name="Boemare N."/>
            <person name="Danchin A."/>
            <person name="Kunst F."/>
        </authorList>
    </citation>
    <scope>NUCLEOTIDE SEQUENCE [LARGE SCALE GENOMIC DNA]</scope>
    <source>
        <strain>DSM 15139 / CIP 105565 / TT01</strain>
    </source>
</reference>
<protein>
    <recommendedName>
        <fullName evidence="1">Tyrosine--tRNA ligase 1</fullName>
        <ecNumber evidence="1">6.1.1.1</ecNumber>
    </recommendedName>
    <alternativeName>
        <fullName evidence="1">Tyrosyl-tRNA synthetase 1</fullName>
        <shortName evidence="1">TyrRS 1</shortName>
    </alternativeName>
</protein>
<feature type="chain" id="PRO_0000234749" description="Tyrosine--tRNA ligase 1">
    <location>
        <begin position="1"/>
        <end position="424"/>
    </location>
</feature>
<feature type="domain" description="S4 RNA-binding" evidence="1">
    <location>
        <begin position="357"/>
        <end position="414"/>
    </location>
</feature>
<feature type="short sequence motif" description="'HIGH' region">
    <location>
        <begin position="42"/>
        <end position="51"/>
    </location>
</feature>
<feature type="short sequence motif" description="'KMSKS' region">
    <location>
        <begin position="235"/>
        <end position="239"/>
    </location>
</feature>
<feature type="binding site" evidence="1">
    <location>
        <position position="37"/>
    </location>
    <ligand>
        <name>L-tyrosine</name>
        <dbReference type="ChEBI" id="CHEBI:58315"/>
    </ligand>
</feature>
<feature type="binding site" evidence="1">
    <location>
        <position position="175"/>
    </location>
    <ligand>
        <name>L-tyrosine</name>
        <dbReference type="ChEBI" id="CHEBI:58315"/>
    </ligand>
</feature>
<feature type="binding site" evidence="1">
    <location>
        <position position="179"/>
    </location>
    <ligand>
        <name>L-tyrosine</name>
        <dbReference type="ChEBI" id="CHEBI:58315"/>
    </ligand>
</feature>
<feature type="binding site" evidence="1">
    <location>
        <position position="238"/>
    </location>
    <ligand>
        <name>ATP</name>
        <dbReference type="ChEBI" id="CHEBI:30616"/>
    </ligand>
</feature>
<sequence>MSSNNLIKQLQERGLIAQVTDENALAERLAQGPVSLYCGFDPTADSLHLGHLVPLLCLKRFQLAGHKPVALVGGATGLIGDPSFKATERKLNTEATVKEWVEKIRRQVSPFLDFDCGENSAKTANNYDWFGNMDVLAFLRDIGKHFSVNQMINKEAVKQRLNRDDVGISFTEFSYNLLQSYDFARLNEVHGVELQIGGSDQWGNITSGIDLTRRITQKQVFGMTVPLITKSDGTKFGKTEGGAVWLDPKKTSPYKFYQFWINTADADVYRFLKFFTFMNLEDIDALEEEDKNSGKAPRAQYVLAEQVTGMVHGEEGLAAAKRITESLFSGAAADLTEADFAQLAQDGMPVIELEKGADLQQALVNAGLVPSRGQARTMISSNAVAINGEKQSEPEYLFTDSNRLFDRYTLLRRGKKHDCLICWK</sequence>
<evidence type="ECO:0000255" key="1">
    <source>
        <dbReference type="HAMAP-Rule" id="MF_02006"/>
    </source>
</evidence>
<comment type="function">
    <text evidence="1">Catalyzes the attachment of tyrosine to tRNA(Tyr) in a two-step reaction: tyrosine is first activated by ATP to form Tyr-AMP and then transferred to the acceptor end of tRNA(Tyr).</text>
</comment>
<comment type="catalytic activity">
    <reaction evidence="1">
        <text>tRNA(Tyr) + L-tyrosine + ATP = L-tyrosyl-tRNA(Tyr) + AMP + diphosphate + H(+)</text>
        <dbReference type="Rhea" id="RHEA:10220"/>
        <dbReference type="Rhea" id="RHEA-COMP:9706"/>
        <dbReference type="Rhea" id="RHEA-COMP:9707"/>
        <dbReference type="ChEBI" id="CHEBI:15378"/>
        <dbReference type="ChEBI" id="CHEBI:30616"/>
        <dbReference type="ChEBI" id="CHEBI:33019"/>
        <dbReference type="ChEBI" id="CHEBI:58315"/>
        <dbReference type="ChEBI" id="CHEBI:78442"/>
        <dbReference type="ChEBI" id="CHEBI:78536"/>
        <dbReference type="ChEBI" id="CHEBI:456215"/>
        <dbReference type="EC" id="6.1.1.1"/>
    </reaction>
</comment>
<comment type="subunit">
    <text evidence="1">Homodimer.</text>
</comment>
<comment type="subcellular location">
    <subcellularLocation>
        <location evidence="1">Cytoplasm</location>
    </subcellularLocation>
</comment>
<comment type="similarity">
    <text evidence="1">Belongs to the class-I aminoacyl-tRNA synthetase family. TyrS type 1 subfamily.</text>
</comment>
<name>SYY1_PHOLL</name>
<keyword id="KW-0030">Aminoacyl-tRNA synthetase</keyword>
<keyword id="KW-0067">ATP-binding</keyword>
<keyword id="KW-0963">Cytoplasm</keyword>
<keyword id="KW-0436">Ligase</keyword>
<keyword id="KW-0547">Nucleotide-binding</keyword>
<keyword id="KW-0648">Protein biosynthesis</keyword>
<keyword id="KW-1185">Reference proteome</keyword>
<keyword id="KW-0694">RNA-binding</keyword>
<accession>Q7N3W6</accession>
<proteinExistence type="inferred from homology"/>
<organism>
    <name type="scientific">Photorhabdus laumondii subsp. laumondii (strain DSM 15139 / CIP 105565 / TT01)</name>
    <name type="common">Photorhabdus luminescens subsp. laumondii</name>
    <dbReference type="NCBI Taxonomy" id="243265"/>
    <lineage>
        <taxon>Bacteria</taxon>
        <taxon>Pseudomonadati</taxon>
        <taxon>Pseudomonadota</taxon>
        <taxon>Gammaproteobacteria</taxon>
        <taxon>Enterobacterales</taxon>
        <taxon>Morganellaceae</taxon>
        <taxon>Photorhabdus</taxon>
    </lineage>
</organism>